<comment type="function">
    <text evidence="3">Regulatory subunit of calcineurin, a calcium-dependent, calmodulin stimulated protein phosphatase. Confers calcium sensitivity. Plays a central role in virulence and antifungal drug action.</text>
</comment>
<comment type="subunit">
    <text evidence="1">Composed of a catalytic subunit (A) and a regulatory subunit (B).</text>
</comment>
<comment type="miscellaneous">
    <text evidence="1">This protein has four functional calcium-binding sites.</text>
</comment>
<comment type="similarity">
    <text evidence="4">Belongs to the calcineurin regulatory subunit family.</text>
</comment>
<proteinExistence type="evidence at transcript level"/>
<reference key="1">
    <citation type="journal article" date="2001" name="Mol. Microbiol.">
        <title>Calcineurin regulatory subunit is essential for virulence and mediates interactions with FKBP12-FK506 in Cryptococcus neoformans.</title>
        <authorList>
            <person name="Fox D.S."/>
            <person name="Cruz M.C."/>
            <person name="Sia R.A."/>
            <person name="Ke H."/>
            <person name="Cox G.M."/>
            <person name="Cardenas M.E."/>
            <person name="Heitman J."/>
        </authorList>
    </citation>
    <scope>NUCLEOTIDE SEQUENCE [GENOMIC DNA / MRNA]</scope>
    <scope>VARIANT FKR1-1 VAL-GLN-128 INS</scope>
    <scope>FUNCTION</scope>
    <source>
        <strain>C21F2</strain>
        <strain>JEC21 / ATCC MYA-565</strain>
    </source>
</reference>
<reference key="2">
    <citation type="journal article" date="2005" name="Science">
        <title>The genome of the basidiomycetous yeast and human pathogen Cryptococcus neoformans.</title>
        <authorList>
            <person name="Loftus B.J."/>
            <person name="Fung E."/>
            <person name="Roncaglia P."/>
            <person name="Rowley D."/>
            <person name="Amedeo P."/>
            <person name="Bruno D."/>
            <person name="Vamathevan J."/>
            <person name="Miranda M."/>
            <person name="Anderson I.J."/>
            <person name="Fraser J.A."/>
            <person name="Allen J.E."/>
            <person name="Bosdet I.E."/>
            <person name="Brent M.R."/>
            <person name="Chiu R."/>
            <person name="Doering T.L."/>
            <person name="Donlin M.J."/>
            <person name="D'Souza C.A."/>
            <person name="Fox D.S."/>
            <person name="Grinberg V."/>
            <person name="Fu J."/>
            <person name="Fukushima M."/>
            <person name="Haas B.J."/>
            <person name="Huang J.C."/>
            <person name="Janbon G."/>
            <person name="Jones S.J.M."/>
            <person name="Koo H.L."/>
            <person name="Krzywinski M.I."/>
            <person name="Kwon-Chung K.J."/>
            <person name="Lengeler K.B."/>
            <person name="Maiti R."/>
            <person name="Marra M.A."/>
            <person name="Marra R.E."/>
            <person name="Mathewson C.A."/>
            <person name="Mitchell T.G."/>
            <person name="Pertea M."/>
            <person name="Riggs F.R."/>
            <person name="Salzberg S.L."/>
            <person name="Schein J.E."/>
            <person name="Shvartsbeyn A."/>
            <person name="Shin H."/>
            <person name="Shumway M."/>
            <person name="Specht C.A."/>
            <person name="Suh B.B."/>
            <person name="Tenney A."/>
            <person name="Utterback T.R."/>
            <person name="Wickes B.L."/>
            <person name="Wortman J.R."/>
            <person name="Wye N.H."/>
            <person name="Kronstad J.W."/>
            <person name="Lodge J.K."/>
            <person name="Heitman J."/>
            <person name="Davis R.W."/>
            <person name="Fraser C.M."/>
            <person name="Hyman R.W."/>
        </authorList>
    </citation>
    <scope>NUCLEOTIDE SEQUENCE [LARGE SCALE GENOMIC DNA]</scope>
    <source>
        <strain>JEC21 / ATCC MYA-565</strain>
    </source>
</reference>
<sequence>MGAAESSMFNSLEKNSNFSGPELMRLKKRFMKLDKDGSGSIDKDEFLQIPQIANNPLAHRMIAIFDEDGSGTVDFQEFVGGLSAFSSKGGRDEKLRFAFKVYDMDRDGYISNGELYLVLKQMVGNNLKDQQLQQIVDKTIMEADKDGDGKLSFEEFTQMVASTDIVKQMTLEDLF</sequence>
<protein>
    <recommendedName>
        <fullName>Calcineurin subunit B</fullName>
    </recommendedName>
    <alternativeName>
        <fullName>Calcineurin regulatory subunit</fullName>
    </alternativeName>
    <alternativeName>
        <fullName>Protein phosphatase 2B regulatory subunit</fullName>
    </alternativeName>
</protein>
<dbReference type="EMBL" id="AF282388">
    <property type="protein sequence ID" value="AAG13937.1"/>
    <property type="molecule type" value="Genomic_DNA"/>
</dbReference>
<dbReference type="EMBL" id="AF282387">
    <property type="protein sequence ID" value="AAG13936.1"/>
    <property type="molecule type" value="mRNA"/>
</dbReference>
<dbReference type="EMBL" id="AF282386">
    <property type="protein sequence ID" value="AAG13935.1"/>
    <property type="molecule type" value="Genomic_DNA"/>
</dbReference>
<dbReference type="EMBL" id="AF282385">
    <property type="protein sequence ID" value="AAG13934.1"/>
    <property type="molecule type" value="mRNA"/>
</dbReference>
<dbReference type="EMBL" id="AE017344">
    <property type="protein sequence ID" value="AAW43026.1"/>
    <property type="molecule type" value="Genomic_DNA"/>
</dbReference>
<dbReference type="RefSeq" id="XP_570333.1">
    <property type="nucleotide sequence ID" value="XM_570333.1"/>
</dbReference>
<dbReference type="SMR" id="P0CM54"/>
<dbReference type="FunCoup" id="P0CM54">
    <property type="interactions" value="199"/>
</dbReference>
<dbReference type="STRING" id="214684.P0CM54"/>
<dbReference type="PaxDb" id="214684-P0CM54"/>
<dbReference type="EnsemblFungi" id="AAW43026">
    <property type="protein sequence ID" value="AAW43026"/>
    <property type="gene ID" value="CND00260"/>
</dbReference>
<dbReference type="VEuPathDB" id="FungiDB:CND00260"/>
<dbReference type="eggNOG" id="KOG0034">
    <property type="taxonomic scope" value="Eukaryota"/>
</dbReference>
<dbReference type="HOGENOM" id="CLU_061288_10_1_1"/>
<dbReference type="InParanoid" id="P0CM54"/>
<dbReference type="OMA" id="DTNFDRD"/>
<dbReference type="OrthoDB" id="191686at2759"/>
<dbReference type="PHI-base" id="PHI:474"/>
<dbReference type="Proteomes" id="UP000002149">
    <property type="component" value="Chromosome 4"/>
</dbReference>
<dbReference type="GO" id="GO:0005955">
    <property type="term" value="C:calcineurin complex"/>
    <property type="evidence" value="ECO:0000318"/>
    <property type="project" value="GO_Central"/>
</dbReference>
<dbReference type="GO" id="GO:0005509">
    <property type="term" value="F:calcium ion binding"/>
    <property type="evidence" value="ECO:0007669"/>
    <property type="project" value="EnsemblFungi"/>
</dbReference>
<dbReference type="GO" id="GO:0004723">
    <property type="term" value="F:calcium-dependent protein serine/threonine phosphatase activity"/>
    <property type="evidence" value="ECO:0007669"/>
    <property type="project" value="EnsemblFungi"/>
</dbReference>
<dbReference type="GO" id="GO:0008597">
    <property type="term" value="F:calcium-dependent protein serine/threonine phosphatase regulator activity"/>
    <property type="evidence" value="ECO:0000318"/>
    <property type="project" value="GO_Central"/>
</dbReference>
<dbReference type="GO" id="GO:0019902">
    <property type="term" value="F:phosphatase binding"/>
    <property type="evidence" value="ECO:0000318"/>
    <property type="project" value="GO_Central"/>
</dbReference>
<dbReference type="GO" id="GO:0097720">
    <property type="term" value="P:calcineurin-mediated signaling"/>
    <property type="evidence" value="ECO:0000318"/>
    <property type="project" value="GO_Central"/>
</dbReference>
<dbReference type="GO" id="GO:0071444">
    <property type="term" value="P:cellular response to pheromone"/>
    <property type="evidence" value="ECO:0007669"/>
    <property type="project" value="EnsemblFungi"/>
</dbReference>
<dbReference type="GO" id="GO:0000747">
    <property type="term" value="P:conjugation with cellular fusion"/>
    <property type="evidence" value="ECO:0007669"/>
    <property type="project" value="EnsemblFungi"/>
</dbReference>
<dbReference type="GO" id="GO:0006873">
    <property type="term" value="P:intracellular monoatomic ion homeostasis"/>
    <property type="evidence" value="ECO:0007669"/>
    <property type="project" value="EnsemblFungi"/>
</dbReference>
<dbReference type="CDD" id="cd00051">
    <property type="entry name" value="EFh"/>
    <property type="match status" value="1"/>
</dbReference>
<dbReference type="FunFam" id="1.10.238.10:FF:000047">
    <property type="entry name" value="Calcineurin subunit B type 1"/>
    <property type="match status" value="1"/>
</dbReference>
<dbReference type="Gene3D" id="1.10.238.10">
    <property type="entry name" value="EF-hand"/>
    <property type="match status" value="1"/>
</dbReference>
<dbReference type="InterPro" id="IPR011992">
    <property type="entry name" value="EF-hand-dom_pair"/>
</dbReference>
<dbReference type="InterPro" id="IPR018247">
    <property type="entry name" value="EF_Hand_1_Ca_BS"/>
</dbReference>
<dbReference type="InterPro" id="IPR002048">
    <property type="entry name" value="EF_hand_dom"/>
</dbReference>
<dbReference type="PANTHER" id="PTHR45942">
    <property type="entry name" value="PROTEIN PHOSPATASE 3 REGULATORY SUBUNIT B ALPHA ISOFORM TYPE 1"/>
    <property type="match status" value="1"/>
</dbReference>
<dbReference type="Pfam" id="PF13499">
    <property type="entry name" value="EF-hand_7"/>
    <property type="match status" value="2"/>
</dbReference>
<dbReference type="PRINTS" id="PR01697">
    <property type="entry name" value="PARVALBUMIN"/>
</dbReference>
<dbReference type="SMART" id="SM00054">
    <property type="entry name" value="EFh"/>
    <property type="match status" value="4"/>
</dbReference>
<dbReference type="SUPFAM" id="SSF47473">
    <property type="entry name" value="EF-hand"/>
    <property type="match status" value="1"/>
</dbReference>
<dbReference type="PROSITE" id="PS00018">
    <property type="entry name" value="EF_HAND_1"/>
    <property type="match status" value="4"/>
</dbReference>
<dbReference type="PROSITE" id="PS50222">
    <property type="entry name" value="EF_HAND_2"/>
    <property type="match status" value="4"/>
</dbReference>
<gene>
    <name type="primary">CNB1</name>
    <name type="ordered locus">CND00260</name>
</gene>
<keyword id="KW-0106">Calcium</keyword>
<keyword id="KW-0479">Metal-binding</keyword>
<keyword id="KW-1185">Reference proteome</keyword>
<keyword id="KW-0677">Repeat</keyword>
<keyword id="KW-0843">Virulence</keyword>
<organism>
    <name type="scientific">Cryptococcus neoformans var. neoformans serotype D (strain JEC21 / ATCC MYA-565)</name>
    <name type="common">Filobasidiella neoformans</name>
    <dbReference type="NCBI Taxonomy" id="214684"/>
    <lineage>
        <taxon>Eukaryota</taxon>
        <taxon>Fungi</taxon>
        <taxon>Dikarya</taxon>
        <taxon>Basidiomycota</taxon>
        <taxon>Agaricomycotina</taxon>
        <taxon>Tremellomycetes</taxon>
        <taxon>Tremellales</taxon>
        <taxon>Cryptococcaceae</taxon>
        <taxon>Cryptococcus</taxon>
        <taxon>Cryptococcus neoformans species complex</taxon>
    </lineage>
</organism>
<name>CANB_CRYNJ</name>
<accession>P0CM54</accession>
<accession>Q55T57</accession>
<accession>Q5KJ85</accession>
<accession>Q9HDD3</accession>
<accession>Q9HDE1</accession>
<feature type="chain" id="PRO_0000073492" description="Calcineurin subunit B">
    <location>
        <begin position="1"/>
        <end position="175"/>
    </location>
</feature>
<feature type="domain" description="EF-hand 1" evidence="2">
    <location>
        <begin position="21"/>
        <end position="56"/>
    </location>
</feature>
<feature type="domain" description="EF-hand 2" evidence="2">
    <location>
        <begin position="60"/>
        <end position="88"/>
    </location>
</feature>
<feature type="domain" description="EF-hand 3" evidence="2">
    <location>
        <begin position="90"/>
        <end position="125"/>
    </location>
</feature>
<feature type="domain" description="EF-hand 4" evidence="2">
    <location>
        <begin position="131"/>
        <end position="166"/>
    </location>
</feature>
<feature type="binding site" evidence="2">
    <location>
        <position position="34"/>
    </location>
    <ligand>
        <name>Ca(2+)</name>
        <dbReference type="ChEBI" id="CHEBI:29108"/>
        <label>1</label>
    </ligand>
</feature>
<feature type="binding site" evidence="2">
    <location>
        <position position="36"/>
    </location>
    <ligand>
        <name>Ca(2+)</name>
        <dbReference type="ChEBI" id="CHEBI:29108"/>
        <label>1</label>
    </ligand>
</feature>
<feature type="binding site" evidence="2">
    <location>
        <position position="38"/>
    </location>
    <ligand>
        <name>Ca(2+)</name>
        <dbReference type="ChEBI" id="CHEBI:29108"/>
        <label>1</label>
    </ligand>
</feature>
<feature type="binding site" evidence="2">
    <location>
        <position position="40"/>
    </location>
    <ligand>
        <name>Ca(2+)</name>
        <dbReference type="ChEBI" id="CHEBI:29108"/>
        <label>1</label>
    </ligand>
</feature>
<feature type="binding site" evidence="2">
    <location>
        <position position="45"/>
    </location>
    <ligand>
        <name>Ca(2+)</name>
        <dbReference type="ChEBI" id="CHEBI:29108"/>
        <label>1</label>
    </ligand>
</feature>
<feature type="binding site" evidence="2">
    <location>
        <position position="66"/>
    </location>
    <ligand>
        <name>Ca(2+)</name>
        <dbReference type="ChEBI" id="CHEBI:29108"/>
        <label>2</label>
    </ligand>
</feature>
<feature type="binding site" evidence="2">
    <location>
        <position position="68"/>
    </location>
    <ligand>
        <name>Ca(2+)</name>
        <dbReference type="ChEBI" id="CHEBI:29108"/>
        <label>2</label>
    </ligand>
</feature>
<feature type="binding site" evidence="2">
    <location>
        <position position="70"/>
    </location>
    <ligand>
        <name>Ca(2+)</name>
        <dbReference type="ChEBI" id="CHEBI:29108"/>
        <label>2</label>
    </ligand>
</feature>
<feature type="binding site" evidence="2">
    <location>
        <position position="72"/>
    </location>
    <ligand>
        <name>Ca(2+)</name>
        <dbReference type="ChEBI" id="CHEBI:29108"/>
        <label>2</label>
    </ligand>
</feature>
<feature type="binding site" evidence="2">
    <location>
        <position position="77"/>
    </location>
    <ligand>
        <name>Ca(2+)</name>
        <dbReference type="ChEBI" id="CHEBI:29108"/>
        <label>2</label>
    </ligand>
</feature>
<feature type="binding site" evidence="2">
    <location>
        <position position="103"/>
    </location>
    <ligand>
        <name>Ca(2+)</name>
        <dbReference type="ChEBI" id="CHEBI:29108"/>
        <label>3</label>
    </ligand>
</feature>
<feature type="binding site" evidence="2">
    <location>
        <position position="105"/>
    </location>
    <ligand>
        <name>Ca(2+)</name>
        <dbReference type="ChEBI" id="CHEBI:29108"/>
        <label>3</label>
    </ligand>
</feature>
<feature type="binding site" evidence="2">
    <location>
        <position position="107"/>
    </location>
    <ligand>
        <name>Ca(2+)</name>
        <dbReference type="ChEBI" id="CHEBI:29108"/>
        <label>3</label>
    </ligand>
</feature>
<feature type="binding site" evidence="2">
    <location>
        <position position="109"/>
    </location>
    <ligand>
        <name>Ca(2+)</name>
        <dbReference type="ChEBI" id="CHEBI:29108"/>
        <label>3</label>
    </ligand>
</feature>
<feature type="binding site" evidence="2">
    <location>
        <position position="114"/>
    </location>
    <ligand>
        <name>Ca(2+)</name>
        <dbReference type="ChEBI" id="CHEBI:29108"/>
        <label>3</label>
    </ligand>
</feature>
<feature type="binding site" evidence="2">
    <location>
        <position position="144"/>
    </location>
    <ligand>
        <name>Ca(2+)</name>
        <dbReference type="ChEBI" id="CHEBI:29108"/>
        <label>4</label>
    </ligand>
</feature>
<feature type="binding site" evidence="2">
    <location>
        <position position="146"/>
    </location>
    <ligand>
        <name>Ca(2+)</name>
        <dbReference type="ChEBI" id="CHEBI:29108"/>
        <label>4</label>
    </ligand>
</feature>
<feature type="binding site" evidence="2">
    <location>
        <position position="148"/>
    </location>
    <ligand>
        <name>Ca(2+)</name>
        <dbReference type="ChEBI" id="CHEBI:29108"/>
        <label>4</label>
    </ligand>
</feature>
<feature type="binding site" evidence="2">
    <location>
        <position position="150"/>
    </location>
    <ligand>
        <name>Ca(2+)</name>
        <dbReference type="ChEBI" id="CHEBI:29108"/>
        <label>4</label>
    </ligand>
</feature>
<feature type="binding site" evidence="2">
    <location>
        <position position="155"/>
    </location>
    <ligand>
        <name>Ca(2+)</name>
        <dbReference type="ChEBI" id="CHEBI:29108"/>
        <label>4</label>
    </ligand>
</feature>
<feature type="sequence variant" description="In FKR1-1; FK506-resistant." evidence="3">
    <original>K</original>
    <variation>KVQ</variation>
    <location>
        <position position="128"/>
    </location>
</feature>
<evidence type="ECO:0000250" key="1"/>
<evidence type="ECO:0000255" key="2">
    <source>
        <dbReference type="PROSITE-ProRule" id="PRU00448"/>
    </source>
</evidence>
<evidence type="ECO:0000269" key="3">
    <source>
    </source>
</evidence>
<evidence type="ECO:0000305" key="4"/>